<organism>
    <name type="scientific">Human papillomavirus type 55</name>
    <dbReference type="NCBI Taxonomy" id="37114"/>
    <lineage>
        <taxon>Viruses</taxon>
        <taxon>Monodnaviria</taxon>
        <taxon>Shotokuvirae</taxon>
        <taxon>Cossaviricota</taxon>
        <taxon>Papovaviricetes</taxon>
        <taxon>Zurhausenvirales</taxon>
        <taxon>Papillomaviridae</taxon>
        <taxon>Firstpapillomavirinae</taxon>
        <taxon>Alphapapillomavirus</taxon>
        <taxon>Alphapapillomavirus 10</taxon>
    </lineage>
</organism>
<evidence type="ECO:0000255" key="1">
    <source>
        <dbReference type="HAMAP-Rule" id="MF_04001"/>
    </source>
</evidence>
<evidence type="ECO:0000256" key="2">
    <source>
        <dbReference type="SAM" id="MobiDB-lite"/>
    </source>
</evidence>
<reference key="1">
    <citation type="submission" date="1995-10" db="EMBL/GenBank/DDBJ databases">
        <authorList>
            <person name="Delius H."/>
        </authorList>
    </citation>
    <scope>NUCLEOTIDE SEQUENCE [GENOMIC DNA]</scope>
</reference>
<organismHost>
    <name type="scientific">Homo sapiens</name>
    <name type="common">Human</name>
    <dbReference type="NCBI Taxonomy" id="9606"/>
</organismHost>
<protein>
    <recommendedName>
        <fullName evidence="1">Regulatory protein E2</fullName>
    </recommendedName>
</protein>
<comment type="function">
    <text evidence="1">Plays a role in the initiation of viral DNA replication. A dimer of E2 interacts with a dimer of E1 in order to improve specificity of E1 DNA binding activity. Once the complex recognizes and binds DNA at specific sites, the E2 dimer is removed from DNA. E2 also regulates viral transcription through binding to the E2RE response element (5'-ACCNNNNNNGGT-3') present in multiple copies in the regulatory regions of the viral genome. Activates or represses transcription depending on E2RE's position with regards to proximal promoter elements including the TATA-box. Repression occurs by sterically hindering the assembly of the transcription initiation complex.</text>
</comment>
<comment type="subunit">
    <text evidence="1">Binds DNA as homodimer. Interacts with protein E1; this interaction greatly increases E1 DNA-binding activity. Interacts with protein L1; this interaction enhances E2-dependent replication and transcription activation. Interacts with protein L2; this interaction inhibits E2 transcriptional activity but not DNA replication function E2. Interacts with protein E7; this interaction inhibits E7 oncogenic activity. Interacts with host TAF1; this interaction modulates E2-dependent transcriptional regulation. Interacts with host BRD4; this interaction mediates E2 transcriptional activation function. Additionally, the interaction with host BRD4 on mitotic chromosomes mediates tethering of the viral genome. Interacts with host TOPBP1; this interaction is required for optimal viral DNA replication.</text>
</comment>
<comment type="subcellular location">
    <subcellularLocation>
        <location evidence="1">Host nucleus</location>
    </subcellularLocation>
</comment>
<comment type="PTM">
    <text evidence="1">Phosphorylated.</text>
</comment>
<comment type="similarity">
    <text evidence="1">Belongs to the papillomaviridae E2 protein family.</text>
</comment>
<proteinExistence type="inferred from homology"/>
<gene>
    <name evidence="1" type="primary">E2</name>
</gene>
<name>VE2_HPV55</name>
<sequence>METIAKHLDVCQEQLLELYEENSNNLTKHIQHWKCIRYECVLLHKAKQMGLNHIGMQVVPALTVSQTKGHQAIEMQMTLETLLNSDYGMEPWTLQDTSREMWLTAPKYCFKKQGQTVEVKYDCNADNIMEYVSWKYIYVHDTDKWVKVTGHIDYKGLYYVHGGHKTYYTNFEKEAKKYGNSLQWEVCIGSSVICSPASISSTVQDVSIAGPASHTSSSTTTTLAQASPALPTCTSEERVDPPPCKRPRGPTTNTNNARDTVSVRHSDSVDSTNNNIYPNSYNSNKGRDNNFCTATPVVQLQGDPNCLKCLRYRLHAKHKTLFVAASSTWRWTCSDTSSKHALVTLTYVNEEQREQFLNTVRLPPTVTYKVGYMSLQLL</sequence>
<accession>Q80937</accession>
<keyword id="KW-0010">Activator</keyword>
<keyword id="KW-0235">DNA replication</keyword>
<keyword id="KW-0238">DNA-binding</keyword>
<keyword id="KW-0244">Early protein</keyword>
<keyword id="KW-1048">Host nucleus</keyword>
<keyword id="KW-0597">Phosphoprotein</keyword>
<keyword id="KW-0678">Repressor</keyword>
<keyword id="KW-0804">Transcription</keyword>
<keyword id="KW-0805">Transcription regulation</keyword>
<dbReference type="EMBL" id="U31791">
    <property type="protein sequence ID" value="AAA79481.1"/>
    <property type="molecule type" value="Genomic_DNA"/>
</dbReference>
<dbReference type="SMR" id="Q80937"/>
<dbReference type="Proteomes" id="UP000152738">
    <property type="component" value="Genome"/>
</dbReference>
<dbReference type="GO" id="GO:0042025">
    <property type="term" value="C:host cell nucleus"/>
    <property type="evidence" value="ECO:0007669"/>
    <property type="project" value="UniProtKB-SubCell"/>
</dbReference>
<dbReference type="GO" id="GO:0003677">
    <property type="term" value="F:DNA binding"/>
    <property type="evidence" value="ECO:0007669"/>
    <property type="project" value="UniProtKB-UniRule"/>
</dbReference>
<dbReference type="GO" id="GO:0003700">
    <property type="term" value="F:DNA-binding transcription factor activity"/>
    <property type="evidence" value="ECO:0007669"/>
    <property type="project" value="UniProtKB-UniRule"/>
</dbReference>
<dbReference type="GO" id="GO:0000166">
    <property type="term" value="F:nucleotide binding"/>
    <property type="evidence" value="ECO:0007669"/>
    <property type="project" value="UniProtKB-UniRule"/>
</dbReference>
<dbReference type="GO" id="GO:0006260">
    <property type="term" value="P:DNA replication"/>
    <property type="evidence" value="ECO:0007669"/>
    <property type="project" value="UniProtKB-KW"/>
</dbReference>
<dbReference type="GO" id="GO:0006351">
    <property type="term" value="P:DNA-templated transcription"/>
    <property type="evidence" value="ECO:0007669"/>
    <property type="project" value="UniProtKB-UniRule"/>
</dbReference>
<dbReference type="GO" id="GO:0006275">
    <property type="term" value="P:regulation of DNA replication"/>
    <property type="evidence" value="ECO:0007669"/>
    <property type="project" value="UniProtKB-UniRule"/>
</dbReference>
<dbReference type="GO" id="GO:0039693">
    <property type="term" value="P:viral DNA genome replication"/>
    <property type="evidence" value="ECO:0007669"/>
    <property type="project" value="UniProtKB-UniRule"/>
</dbReference>
<dbReference type="Gene3D" id="3.30.70.330">
    <property type="match status" value="1"/>
</dbReference>
<dbReference type="Gene3D" id="1.10.287.30">
    <property type="entry name" value="E2 (early) protein, N terminal domain, subdomain 1"/>
    <property type="match status" value="1"/>
</dbReference>
<dbReference type="Gene3D" id="2.170.200.10">
    <property type="entry name" value="Papillomavirus E2 early protein domain"/>
    <property type="match status" value="1"/>
</dbReference>
<dbReference type="HAMAP" id="MF_04001">
    <property type="entry name" value="PPV_E2"/>
    <property type="match status" value="1"/>
</dbReference>
<dbReference type="InterPro" id="IPR035975">
    <property type="entry name" value="E2/EBNA1_C_sf"/>
</dbReference>
<dbReference type="InterPro" id="IPR012677">
    <property type="entry name" value="Nucleotide-bd_a/b_plait_sf"/>
</dbReference>
<dbReference type="InterPro" id="IPR000427">
    <property type="entry name" value="Papillomavirus_E2_C"/>
</dbReference>
<dbReference type="InterPro" id="IPR001866">
    <property type="entry name" value="PPV_E2_N"/>
</dbReference>
<dbReference type="InterPro" id="IPR033668">
    <property type="entry name" value="Reg_prot_E2"/>
</dbReference>
<dbReference type="InterPro" id="IPR036050">
    <property type="entry name" value="Regulatory_protein_E2_N"/>
</dbReference>
<dbReference type="InterPro" id="IPR042503">
    <property type="entry name" value="Regulatory_protein_E2_N_1"/>
</dbReference>
<dbReference type="InterPro" id="IPR042504">
    <property type="entry name" value="Regulatory_protein_E2_N_2"/>
</dbReference>
<dbReference type="Pfam" id="PF00511">
    <property type="entry name" value="PPV_E2_C"/>
    <property type="match status" value="1"/>
</dbReference>
<dbReference type="Pfam" id="PF00508">
    <property type="entry name" value="PPV_E2_N"/>
    <property type="match status" value="1"/>
</dbReference>
<dbReference type="SUPFAM" id="SSF51332">
    <property type="entry name" value="E2 regulatory, transactivation domain"/>
    <property type="match status" value="1"/>
</dbReference>
<dbReference type="SUPFAM" id="SSF54957">
    <property type="entry name" value="Viral DNA-binding domain"/>
    <property type="match status" value="1"/>
</dbReference>
<feature type="chain" id="PRO_0000133233" description="Regulatory protein E2">
    <location>
        <begin position="1"/>
        <end position="378"/>
    </location>
</feature>
<feature type="region of interest" description="Transactivation domain" evidence="1">
    <location>
        <begin position="1"/>
        <end position="200"/>
    </location>
</feature>
<feature type="region of interest" description="Disordered" evidence="2">
    <location>
        <begin position="209"/>
        <end position="282"/>
    </location>
</feature>
<feature type="region of interest" description="DNA-binding domain" evidence="1">
    <location>
        <begin position="295"/>
        <end position="378"/>
    </location>
</feature>
<feature type="compositionally biased region" description="Low complexity" evidence="2">
    <location>
        <begin position="209"/>
        <end position="232"/>
    </location>
</feature>
<feature type="compositionally biased region" description="Polar residues" evidence="2">
    <location>
        <begin position="250"/>
        <end position="259"/>
    </location>
</feature>
<feature type="compositionally biased region" description="Low complexity" evidence="2">
    <location>
        <begin position="273"/>
        <end position="282"/>
    </location>
</feature>